<sequence>MSAEKQKYGVHSEAGKLRKVMVCAPGLAHKRLTPSNCDELLFDDVIWVDQAKRDHFDFVTKMRERGVDVLEMHNLLTDIVQNKEALKWILDRKITPDTVGVGLTNEVRSWLEGLEPRHLAEFLIGGVAGQDLPQSEGADVVKMYNDYLGHSSFILPPLPNTQFTRDTTCWIYGGVTLNPMYWPARRQETLLTTAIYKFHKEFTEADFQVWYGDPDKDHGNATLEGGDVMPIGNGIVLIGMGERTSRQAIGQLAQNLFAKGAVKEVIVAGLPKSRAAMHLDTVFSFCDRDLVTVFPEVVKEIVPFIIRPDESKPYGMDVRRINKSFIEVVGEQLGVQLRVVETGGNSFAAEREQWDDGNNVVAIEPGVVIGYDRNTYTNTLLRKAGIEVITISAGELGRGRGGGHCMTCPIVRDPINY</sequence>
<proteinExistence type="inferred from homology"/>
<organism>
    <name type="scientific">Pseudomonas putida (strain ATCC 47054 / DSM 6125 / CFBP 8728 / NCIMB 11950 / KT2440)</name>
    <dbReference type="NCBI Taxonomy" id="160488"/>
    <lineage>
        <taxon>Bacteria</taxon>
        <taxon>Pseudomonadati</taxon>
        <taxon>Pseudomonadota</taxon>
        <taxon>Gammaproteobacteria</taxon>
        <taxon>Pseudomonadales</taxon>
        <taxon>Pseudomonadaceae</taxon>
        <taxon>Pseudomonas</taxon>
    </lineage>
</organism>
<evidence type="ECO:0000255" key="1">
    <source>
        <dbReference type="HAMAP-Rule" id="MF_00242"/>
    </source>
</evidence>
<comment type="catalytic activity">
    <reaction evidence="1">
        <text>L-arginine + H2O = L-citrulline + NH4(+)</text>
        <dbReference type="Rhea" id="RHEA:19597"/>
        <dbReference type="ChEBI" id="CHEBI:15377"/>
        <dbReference type="ChEBI" id="CHEBI:28938"/>
        <dbReference type="ChEBI" id="CHEBI:32682"/>
        <dbReference type="ChEBI" id="CHEBI:57743"/>
        <dbReference type="EC" id="3.5.3.6"/>
    </reaction>
</comment>
<comment type="pathway">
    <text evidence="1">Amino-acid degradation; L-arginine degradation via ADI pathway; carbamoyl phosphate from L-arginine: step 1/2.</text>
</comment>
<comment type="subcellular location">
    <subcellularLocation>
        <location evidence="1">Cytoplasm</location>
    </subcellularLocation>
</comment>
<comment type="similarity">
    <text evidence="1">Belongs to the arginine deiminase family.</text>
</comment>
<keyword id="KW-0056">Arginine metabolism</keyword>
<keyword id="KW-0963">Cytoplasm</keyword>
<keyword id="KW-0378">Hydrolase</keyword>
<keyword id="KW-1185">Reference proteome</keyword>
<name>ARCA_PSEPK</name>
<protein>
    <recommendedName>
        <fullName evidence="1">Arginine deiminase</fullName>
        <shortName evidence="1">ADI</shortName>
        <ecNumber evidence="1">3.5.3.6</ecNumber>
    </recommendedName>
    <alternativeName>
        <fullName evidence="1">Arginine dihydrolase</fullName>
        <shortName evidence="1">AD</shortName>
    </alternativeName>
</protein>
<gene>
    <name evidence="1" type="primary">arcA</name>
    <name type="ordered locus">PP_1001</name>
</gene>
<dbReference type="EC" id="3.5.3.6" evidence="1"/>
<dbReference type="EMBL" id="AE015451">
    <property type="protein sequence ID" value="AAN66626.1"/>
    <property type="molecule type" value="Genomic_DNA"/>
</dbReference>
<dbReference type="RefSeq" id="NP_743162.1">
    <property type="nucleotide sequence ID" value="NC_002947.4"/>
</dbReference>
<dbReference type="RefSeq" id="WP_010952186.1">
    <property type="nucleotide sequence ID" value="NZ_CP169744.1"/>
</dbReference>
<dbReference type="SMR" id="Q88P52"/>
<dbReference type="STRING" id="160488.PP_1001"/>
<dbReference type="PaxDb" id="160488-PP_1001"/>
<dbReference type="GeneID" id="83678352"/>
<dbReference type="KEGG" id="ppu:PP_1001"/>
<dbReference type="PATRIC" id="fig|160488.4.peg.1064"/>
<dbReference type="eggNOG" id="COG2235">
    <property type="taxonomic scope" value="Bacteria"/>
</dbReference>
<dbReference type="HOGENOM" id="CLU_052662_0_0_6"/>
<dbReference type="OrthoDB" id="9807502at2"/>
<dbReference type="PhylomeDB" id="Q88P52"/>
<dbReference type="BioCyc" id="PPUT160488:G1G01-1074-MONOMER"/>
<dbReference type="BRENDA" id="3.5.3.6">
    <property type="organism ID" value="5092"/>
</dbReference>
<dbReference type="UniPathway" id="UPA00254">
    <property type="reaction ID" value="UER00364"/>
</dbReference>
<dbReference type="Proteomes" id="UP000000556">
    <property type="component" value="Chromosome"/>
</dbReference>
<dbReference type="GO" id="GO:0005737">
    <property type="term" value="C:cytoplasm"/>
    <property type="evidence" value="ECO:0007669"/>
    <property type="project" value="UniProtKB-SubCell"/>
</dbReference>
<dbReference type="GO" id="GO:0016990">
    <property type="term" value="F:arginine deiminase activity"/>
    <property type="evidence" value="ECO:0007669"/>
    <property type="project" value="UniProtKB-UniRule"/>
</dbReference>
<dbReference type="GO" id="GO:0019547">
    <property type="term" value="P:arginine catabolic process to ornithine"/>
    <property type="evidence" value="ECO:0007669"/>
    <property type="project" value="UniProtKB-UniRule"/>
</dbReference>
<dbReference type="GO" id="GO:0019546">
    <property type="term" value="P:arginine deiminase pathway"/>
    <property type="evidence" value="ECO:0007669"/>
    <property type="project" value="TreeGrafter"/>
</dbReference>
<dbReference type="Gene3D" id="1.10.3930.10">
    <property type="entry name" value="Arginine deiminase"/>
    <property type="match status" value="1"/>
</dbReference>
<dbReference type="Gene3D" id="3.75.10.10">
    <property type="entry name" value="L-arginine/glycine Amidinotransferase, Chain A"/>
    <property type="match status" value="1"/>
</dbReference>
<dbReference type="HAMAP" id="MF_00242">
    <property type="entry name" value="Arg_deiminase"/>
    <property type="match status" value="1"/>
</dbReference>
<dbReference type="InterPro" id="IPR003876">
    <property type="entry name" value="Arg_deiminase"/>
</dbReference>
<dbReference type="NCBIfam" id="TIGR01078">
    <property type="entry name" value="arcA"/>
    <property type="match status" value="1"/>
</dbReference>
<dbReference type="NCBIfam" id="NF002381">
    <property type="entry name" value="PRK01388.1"/>
    <property type="match status" value="1"/>
</dbReference>
<dbReference type="PANTHER" id="PTHR47271">
    <property type="entry name" value="ARGININE DEIMINASE"/>
    <property type="match status" value="1"/>
</dbReference>
<dbReference type="PANTHER" id="PTHR47271:SF3">
    <property type="entry name" value="ARGININE DEIMINASE"/>
    <property type="match status" value="1"/>
</dbReference>
<dbReference type="Pfam" id="PF02274">
    <property type="entry name" value="ADI"/>
    <property type="match status" value="1"/>
</dbReference>
<dbReference type="PIRSF" id="PIRSF006356">
    <property type="entry name" value="Arg_deiminase"/>
    <property type="match status" value="1"/>
</dbReference>
<dbReference type="PRINTS" id="PR01466">
    <property type="entry name" value="ARGDEIMINASE"/>
</dbReference>
<dbReference type="SUPFAM" id="SSF55909">
    <property type="entry name" value="Pentein"/>
    <property type="match status" value="1"/>
</dbReference>
<reference key="1">
    <citation type="journal article" date="2002" name="Environ. Microbiol.">
        <title>Complete genome sequence and comparative analysis of the metabolically versatile Pseudomonas putida KT2440.</title>
        <authorList>
            <person name="Nelson K.E."/>
            <person name="Weinel C."/>
            <person name="Paulsen I.T."/>
            <person name="Dodson R.J."/>
            <person name="Hilbert H."/>
            <person name="Martins dos Santos V.A.P."/>
            <person name="Fouts D.E."/>
            <person name="Gill S.R."/>
            <person name="Pop M."/>
            <person name="Holmes M."/>
            <person name="Brinkac L.M."/>
            <person name="Beanan M.J."/>
            <person name="DeBoy R.T."/>
            <person name="Daugherty S.C."/>
            <person name="Kolonay J.F."/>
            <person name="Madupu R."/>
            <person name="Nelson W.C."/>
            <person name="White O."/>
            <person name="Peterson J.D."/>
            <person name="Khouri H.M."/>
            <person name="Hance I."/>
            <person name="Chris Lee P."/>
            <person name="Holtzapple E.K."/>
            <person name="Scanlan D."/>
            <person name="Tran K."/>
            <person name="Moazzez A."/>
            <person name="Utterback T.R."/>
            <person name="Rizzo M."/>
            <person name="Lee K."/>
            <person name="Kosack D."/>
            <person name="Moestl D."/>
            <person name="Wedler H."/>
            <person name="Lauber J."/>
            <person name="Stjepandic D."/>
            <person name="Hoheisel J."/>
            <person name="Straetz M."/>
            <person name="Heim S."/>
            <person name="Kiewitz C."/>
            <person name="Eisen J.A."/>
            <person name="Timmis K.N."/>
            <person name="Duesterhoeft A."/>
            <person name="Tuemmler B."/>
            <person name="Fraser C.M."/>
        </authorList>
    </citation>
    <scope>NUCLEOTIDE SEQUENCE [LARGE SCALE GENOMIC DNA]</scope>
    <source>
        <strain>ATCC 47054 / DSM 6125 / CFBP 8728 / NCIMB 11950 / KT2440</strain>
    </source>
</reference>
<accession>Q88P52</accession>
<feature type="chain" id="PRO_0000182226" description="Arginine deiminase">
    <location>
        <begin position="1"/>
        <end position="417"/>
    </location>
</feature>
<feature type="active site" description="Amidino-cysteine intermediate" evidence="1">
    <location>
        <position position="405"/>
    </location>
</feature>